<name>Y4633_RHILO</name>
<dbReference type="EMBL" id="BA000012">
    <property type="protein sequence ID" value="BAB51242.1"/>
    <property type="molecule type" value="Genomic_DNA"/>
</dbReference>
<dbReference type="RefSeq" id="WP_010912584.1">
    <property type="nucleotide sequence ID" value="NC_002678.2"/>
</dbReference>
<dbReference type="SMR" id="Q98DM8"/>
<dbReference type="KEGG" id="mlo:mlr4633"/>
<dbReference type="PATRIC" id="fig|266835.9.peg.3662"/>
<dbReference type="eggNOG" id="COG0792">
    <property type="taxonomic scope" value="Bacteria"/>
</dbReference>
<dbReference type="HOGENOM" id="CLU_115353_0_2_5"/>
<dbReference type="Proteomes" id="UP000000552">
    <property type="component" value="Chromosome"/>
</dbReference>
<dbReference type="GO" id="GO:0003676">
    <property type="term" value="F:nucleic acid binding"/>
    <property type="evidence" value="ECO:0007669"/>
    <property type="project" value="InterPro"/>
</dbReference>
<dbReference type="Gene3D" id="3.40.1350.10">
    <property type="match status" value="1"/>
</dbReference>
<dbReference type="HAMAP" id="MF_00048">
    <property type="entry name" value="UPF0102"/>
    <property type="match status" value="1"/>
</dbReference>
<dbReference type="InterPro" id="IPR011335">
    <property type="entry name" value="Restrct_endonuc-II-like"/>
</dbReference>
<dbReference type="InterPro" id="IPR011856">
    <property type="entry name" value="tRNA_endonuc-like_dom_sf"/>
</dbReference>
<dbReference type="InterPro" id="IPR003509">
    <property type="entry name" value="UPF0102_YraN-like"/>
</dbReference>
<dbReference type="NCBIfam" id="NF009151">
    <property type="entry name" value="PRK12497.1-5"/>
    <property type="match status" value="1"/>
</dbReference>
<dbReference type="PANTHER" id="PTHR34039">
    <property type="entry name" value="UPF0102 PROTEIN YRAN"/>
    <property type="match status" value="1"/>
</dbReference>
<dbReference type="PANTHER" id="PTHR34039:SF1">
    <property type="entry name" value="UPF0102 PROTEIN YRAN"/>
    <property type="match status" value="1"/>
</dbReference>
<dbReference type="Pfam" id="PF02021">
    <property type="entry name" value="UPF0102"/>
    <property type="match status" value="1"/>
</dbReference>
<dbReference type="SUPFAM" id="SSF52980">
    <property type="entry name" value="Restriction endonuclease-like"/>
    <property type="match status" value="1"/>
</dbReference>
<proteinExistence type="inferred from homology"/>
<organism>
    <name type="scientific">Mesorhizobium japonicum (strain LMG 29417 / CECT 9101 / MAFF 303099)</name>
    <name type="common">Mesorhizobium loti (strain MAFF 303099)</name>
    <dbReference type="NCBI Taxonomy" id="266835"/>
    <lineage>
        <taxon>Bacteria</taxon>
        <taxon>Pseudomonadati</taxon>
        <taxon>Pseudomonadota</taxon>
        <taxon>Alphaproteobacteria</taxon>
        <taxon>Hyphomicrobiales</taxon>
        <taxon>Phyllobacteriaceae</taxon>
        <taxon>Mesorhizobium</taxon>
    </lineage>
</organism>
<accession>Q98DM8</accession>
<reference key="1">
    <citation type="journal article" date="2000" name="DNA Res.">
        <title>Complete genome structure of the nitrogen-fixing symbiotic bacterium Mesorhizobium loti.</title>
        <authorList>
            <person name="Kaneko T."/>
            <person name="Nakamura Y."/>
            <person name="Sato S."/>
            <person name="Asamizu E."/>
            <person name="Kato T."/>
            <person name="Sasamoto S."/>
            <person name="Watanabe A."/>
            <person name="Idesawa K."/>
            <person name="Ishikawa A."/>
            <person name="Kawashima K."/>
            <person name="Kimura T."/>
            <person name="Kishida Y."/>
            <person name="Kiyokawa C."/>
            <person name="Kohara M."/>
            <person name="Matsumoto M."/>
            <person name="Matsuno A."/>
            <person name="Mochizuki Y."/>
            <person name="Nakayama S."/>
            <person name="Nakazaki N."/>
            <person name="Shimpo S."/>
            <person name="Sugimoto M."/>
            <person name="Takeuchi C."/>
            <person name="Yamada M."/>
            <person name="Tabata S."/>
        </authorList>
    </citation>
    <scope>NUCLEOTIDE SEQUENCE [LARGE SCALE GENOMIC DNA]</scope>
    <source>
        <strain>LMG 29417 / CECT 9101 / MAFF 303099</strain>
    </source>
</reference>
<evidence type="ECO:0000255" key="1">
    <source>
        <dbReference type="HAMAP-Rule" id="MF_00048"/>
    </source>
</evidence>
<feature type="chain" id="PRO_0000167374" description="UPF0102 protein mlr4633">
    <location>
        <begin position="1"/>
        <end position="125"/>
    </location>
</feature>
<gene>
    <name type="ordered locus">mlr4633</name>
</gene>
<comment type="similarity">
    <text evidence="1">Belongs to the UPF0102 family.</text>
</comment>
<protein>
    <recommendedName>
        <fullName evidence="1">UPF0102 protein mlr4633</fullName>
    </recommendedName>
</protein>
<sequence length="125" mass="14610">MAERPSASRQKAYRRGHRGEWLAAAALMLKGYRILARRHRTRFGEIDLIARRGDLVVFVEVKARRSLMEAMEAIGHESERRIEAAADIWLSRQADYGRLSMRFDMVAVLPWRWPVHVENAFYGRN</sequence>